<organism>
    <name type="scientific">Mus musculus</name>
    <name type="common">Mouse</name>
    <dbReference type="NCBI Taxonomy" id="10090"/>
    <lineage>
        <taxon>Eukaryota</taxon>
        <taxon>Metazoa</taxon>
        <taxon>Chordata</taxon>
        <taxon>Craniata</taxon>
        <taxon>Vertebrata</taxon>
        <taxon>Euteleostomi</taxon>
        <taxon>Mammalia</taxon>
        <taxon>Eutheria</taxon>
        <taxon>Euarchontoglires</taxon>
        <taxon>Glires</taxon>
        <taxon>Rodentia</taxon>
        <taxon>Myomorpha</taxon>
        <taxon>Muroidea</taxon>
        <taxon>Muridae</taxon>
        <taxon>Murinae</taxon>
        <taxon>Mus</taxon>
        <taxon>Mus</taxon>
    </lineage>
</organism>
<name>CEND_MOUSE</name>
<sequence>MESRGKSASSPKPDTKVPQATAEAKATPAADGKAPLTKPVKKDTQAEKQEQAAAPGPAATKKTPAKADPVLLNNHSNLKPAPTVPAAPSSPDATSEPKGPGDGAEEDESNTGGRGPWPCENLTPLLVAGGVAVATIALILGVAFLARKK</sequence>
<feature type="chain" id="PRO_0000064952" description="Cell cycle exit and neuronal differentiation protein 1">
    <location>
        <begin position="1"/>
        <end position="149"/>
    </location>
</feature>
<feature type="topological domain" description="Cytoplasmic" evidence="3">
    <location>
        <begin position="1"/>
        <end position="124"/>
    </location>
</feature>
<feature type="transmembrane region" description="Helical; Anchor for type IV membrane protein" evidence="3">
    <location>
        <begin position="125"/>
        <end position="145"/>
    </location>
</feature>
<feature type="topological domain" description="Extracellular" evidence="3">
    <location>
        <begin position="146"/>
        <end position="149"/>
    </location>
</feature>
<feature type="region of interest" description="Disordered" evidence="4">
    <location>
        <begin position="1"/>
        <end position="118"/>
    </location>
</feature>
<feature type="compositionally biased region" description="Polar residues" evidence="4">
    <location>
        <begin position="1"/>
        <end position="12"/>
    </location>
</feature>
<feature type="compositionally biased region" description="Low complexity" evidence="4">
    <location>
        <begin position="20"/>
        <end position="35"/>
    </location>
</feature>
<feature type="compositionally biased region" description="Basic and acidic residues" evidence="4">
    <location>
        <begin position="40"/>
        <end position="50"/>
    </location>
</feature>
<feature type="compositionally biased region" description="Low complexity" evidence="4">
    <location>
        <begin position="51"/>
        <end position="68"/>
    </location>
</feature>
<feature type="compositionally biased region" description="Low complexity" evidence="4">
    <location>
        <begin position="80"/>
        <end position="97"/>
    </location>
</feature>
<feature type="modified residue" description="Phosphoserine" evidence="1">
    <location>
        <position position="10"/>
    </location>
</feature>
<feature type="modified residue" description="Phosphoserine" evidence="1">
    <location>
        <position position="90"/>
    </location>
</feature>
<feature type="modified residue" description="Phosphoserine" evidence="7">
    <location>
        <position position="95"/>
    </location>
</feature>
<feature type="sequence conflict" description="In Ref. 2; BAB23812." evidence="6" ref="2">
    <original>W</original>
    <variation>R</variation>
    <location>
        <position position="117"/>
    </location>
</feature>
<accession>Q9JKC6</accession>
<accession>Q9DBA0</accession>
<reference key="1">
    <citation type="journal article" date="2001" name="Biochem. J.">
        <title>Cloning, expression and localization of human BM88 shows that it maps to chromosome 11p15.5, a region implicated in Beckwith-Wiedemann syndrome and tumorigenesis.</title>
        <authorList>
            <person name="Gaitanou M."/>
            <person name="Buanne P."/>
            <person name="Pappa C."/>
            <person name="Georgopoulou N."/>
            <person name="Mamalaki A."/>
            <person name="Tirone F."/>
            <person name="Matsas R."/>
        </authorList>
    </citation>
    <scope>NUCLEOTIDE SEQUENCE [MRNA]</scope>
</reference>
<reference key="2">
    <citation type="journal article" date="2005" name="Science">
        <title>The transcriptional landscape of the mammalian genome.</title>
        <authorList>
            <person name="Carninci P."/>
            <person name="Kasukawa T."/>
            <person name="Katayama S."/>
            <person name="Gough J."/>
            <person name="Frith M.C."/>
            <person name="Maeda N."/>
            <person name="Oyama R."/>
            <person name="Ravasi T."/>
            <person name="Lenhard B."/>
            <person name="Wells C."/>
            <person name="Kodzius R."/>
            <person name="Shimokawa K."/>
            <person name="Bajic V.B."/>
            <person name="Brenner S.E."/>
            <person name="Batalov S."/>
            <person name="Forrest A.R."/>
            <person name="Zavolan M."/>
            <person name="Davis M.J."/>
            <person name="Wilming L.G."/>
            <person name="Aidinis V."/>
            <person name="Allen J.E."/>
            <person name="Ambesi-Impiombato A."/>
            <person name="Apweiler R."/>
            <person name="Aturaliya R.N."/>
            <person name="Bailey T.L."/>
            <person name="Bansal M."/>
            <person name="Baxter L."/>
            <person name="Beisel K.W."/>
            <person name="Bersano T."/>
            <person name="Bono H."/>
            <person name="Chalk A.M."/>
            <person name="Chiu K.P."/>
            <person name="Choudhary V."/>
            <person name="Christoffels A."/>
            <person name="Clutterbuck D.R."/>
            <person name="Crowe M.L."/>
            <person name="Dalla E."/>
            <person name="Dalrymple B.P."/>
            <person name="de Bono B."/>
            <person name="Della Gatta G."/>
            <person name="di Bernardo D."/>
            <person name="Down T."/>
            <person name="Engstrom P."/>
            <person name="Fagiolini M."/>
            <person name="Faulkner G."/>
            <person name="Fletcher C.F."/>
            <person name="Fukushima T."/>
            <person name="Furuno M."/>
            <person name="Futaki S."/>
            <person name="Gariboldi M."/>
            <person name="Georgii-Hemming P."/>
            <person name="Gingeras T.R."/>
            <person name="Gojobori T."/>
            <person name="Green R.E."/>
            <person name="Gustincich S."/>
            <person name="Harbers M."/>
            <person name="Hayashi Y."/>
            <person name="Hensch T.K."/>
            <person name="Hirokawa N."/>
            <person name="Hill D."/>
            <person name="Huminiecki L."/>
            <person name="Iacono M."/>
            <person name="Ikeo K."/>
            <person name="Iwama A."/>
            <person name="Ishikawa T."/>
            <person name="Jakt M."/>
            <person name="Kanapin A."/>
            <person name="Katoh M."/>
            <person name="Kawasawa Y."/>
            <person name="Kelso J."/>
            <person name="Kitamura H."/>
            <person name="Kitano H."/>
            <person name="Kollias G."/>
            <person name="Krishnan S.P."/>
            <person name="Kruger A."/>
            <person name="Kummerfeld S.K."/>
            <person name="Kurochkin I.V."/>
            <person name="Lareau L.F."/>
            <person name="Lazarevic D."/>
            <person name="Lipovich L."/>
            <person name="Liu J."/>
            <person name="Liuni S."/>
            <person name="McWilliam S."/>
            <person name="Madan Babu M."/>
            <person name="Madera M."/>
            <person name="Marchionni L."/>
            <person name="Matsuda H."/>
            <person name="Matsuzawa S."/>
            <person name="Miki H."/>
            <person name="Mignone F."/>
            <person name="Miyake S."/>
            <person name="Morris K."/>
            <person name="Mottagui-Tabar S."/>
            <person name="Mulder N."/>
            <person name="Nakano N."/>
            <person name="Nakauchi H."/>
            <person name="Ng P."/>
            <person name="Nilsson R."/>
            <person name="Nishiguchi S."/>
            <person name="Nishikawa S."/>
            <person name="Nori F."/>
            <person name="Ohara O."/>
            <person name="Okazaki Y."/>
            <person name="Orlando V."/>
            <person name="Pang K.C."/>
            <person name="Pavan W.J."/>
            <person name="Pavesi G."/>
            <person name="Pesole G."/>
            <person name="Petrovsky N."/>
            <person name="Piazza S."/>
            <person name="Reed J."/>
            <person name="Reid J.F."/>
            <person name="Ring B.Z."/>
            <person name="Ringwald M."/>
            <person name="Rost B."/>
            <person name="Ruan Y."/>
            <person name="Salzberg S.L."/>
            <person name="Sandelin A."/>
            <person name="Schneider C."/>
            <person name="Schoenbach C."/>
            <person name="Sekiguchi K."/>
            <person name="Semple C.A."/>
            <person name="Seno S."/>
            <person name="Sessa L."/>
            <person name="Sheng Y."/>
            <person name="Shibata Y."/>
            <person name="Shimada H."/>
            <person name="Shimada K."/>
            <person name="Silva D."/>
            <person name="Sinclair B."/>
            <person name="Sperling S."/>
            <person name="Stupka E."/>
            <person name="Sugiura K."/>
            <person name="Sultana R."/>
            <person name="Takenaka Y."/>
            <person name="Taki K."/>
            <person name="Tammoja K."/>
            <person name="Tan S.L."/>
            <person name="Tang S."/>
            <person name="Taylor M.S."/>
            <person name="Tegner J."/>
            <person name="Teichmann S.A."/>
            <person name="Ueda H.R."/>
            <person name="van Nimwegen E."/>
            <person name="Verardo R."/>
            <person name="Wei C.L."/>
            <person name="Yagi K."/>
            <person name="Yamanishi H."/>
            <person name="Zabarovsky E."/>
            <person name="Zhu S."/>
            <person name="Zimmer A."/>
            <person name="Hide W."/>
            <person name="Bult C."/>
            <person name="Grimmond S.M."/>
            <person name="Teasdale R.D."/>
            <person name="Liu E.T."/>
            <person name="Brusic V."/>
            <person name="Quackenbush J."/>
            <person name="Wahlestedt C."/>
            <person name="Mattick J.S."/>
            <person name="Hume D.A."/>
            <person name="Kai C."/>
            <person name="Sasaki D."/>
            <person name="Tomaru Y."/>
            <person name="Fukuda S."/>
            <person name="Kanamori-Katayama M."/>
            <person name="Suzuki M."/>
            <person name="Aoki J."/>
            <person name="Arakawa T."/>
            <person name="Iida J."/>
            <person name="Imamura K."/>
            <person name="Itoh M."/>
            <person name="Kato T."/>
            <person name="Kawaji H."/>
            <person name="Kawagashira N."/>
            <person name="Kawashima T."/>
            <person name="Kojima M."/>
            <person name="Kondo S."/>
            <person name="Konno H."/>
            <person name="Nakano K."/>
            <person name="Ninomiya N."/>
            <person name="Nishio T."/>
            <person name="Okada M."/>
            <person name="Plessy C."/>
            <person name="Shibata K."/>
            <person name="Shiraki T."/>
            <person name="Suzuki S."/>
            <person name="Tagami M."/>
            <person name="Waki K."/>
            <person name="Watahiki A."/>
            <person name="Okamura-Oho Y."/>
            <person name="Suzuki H."/>
            <person name="Kawai J."/>
            <person name="Hayashizaki Y."/>
        </authorList>
    </citation>
    <scope>NUCLEOTIDE SEQUENCE [LARGE SCALE MRNA]</scope>
    <source>
        <strain>C57BL/6J</strain>
        <tissue>Cerebellum</tissue>
        <tissue>Diencephalon</tissue>
    </source>
</reference>
<reference key="3">
    <citation type="journal article" date="2004" name="Genome Res.">
        <title>The status, quality, and expansion of the NIH full-length cDNA project: the Mammalian Gene Collection (MGC).</title>
        <authorList>
            <consortium name="The MGC Project Team"/>
        </authorList>
    </citation>
    <scope>NUCLEOTIDE SEQUENCE [LARGE SCALE MRNA]</scope>
    <source>
        <strain>C57BL/6J</strain>
        <tissue>Eye</tissue>
    </source>
</reference>
<reference key="4">
    <citation type="submission" date="2007-04" db="UniProtKB">
        <authorList>
            <person name="Lubec G."/>
            <person name="Kang S.U."/>
        </authorList>
    </citation>
    <scope>PROTEIN SEQUENCE OF 43-61 AND 99-114</scope>
    <scope>IDENTIFICATION BY MASS SPECTROMETRY</scope>
    <source>
        <strain>C57BL/6J</strain>
        <tissue>Brain</tissue>
    </source>
</reference>
<reference key="5">
    <citation type="journal article" date="2010" name="Cell">
        <title>A tissue-specific atlas of mouse protein phosphorylation and expression.</title>
        <authorList>
            <person name="Huttlin E.L."/>
            <person name="Jedrychowski M.P."/>
            <person name="Elias J.E."/>
            <person name="Goswami T."/>
            <person name="Rad R."/>
            <person name="Beausoleil S.A."/>
            <person name="Villen J."/>
            <person name="Haas W."/>
            <person name="Sowa M.E."/>
            <person name="Gygi S.P."/>
        </authorList>
    </citation>
    <scope>PHOSPHORYLATION [LARGE SCALE ANALYSIS] AT SER-95</scope>
    <scope>IDENTIFICATION BY MASS SPECTROMETRY [LARGE SCALE ANALYSIS]</scope>
    <source>
        <tissue>Brain</tissue>
    </source>
</reference>
<reference key="6">
    <citation type="journal article" date="2013" name="J. Neurosci.">
        <title>Loss of Ahi1 affects early development by impairing BM88/Cend1-mediated neuronal differentiation.</title>
        <authorList>
            <person name="Weng L."/>
            <person name="Lin Y.F."/>
            <person name="Li A.L."/>
            <person name="Wang C.E."/>
            <person name="Yan S."/>
            <person name="Sun M."/>
            <person name="Gaertig M.A."/>
            <person name="Mitha N."/>
            <person name="Kosaka J."/>
            <person name="Wakabayashi T."/>
            <person name="Xu X."/>
            <person name="Tang B."/>
            <person name="Li S."/>
            <person name="Li X.J."/>
        </authorList>
    </citation>
    <scope>FUNCTION</scope>
    <scope>INTERACTION WITH AHI1</scope>
    <scope>TISSUE SPECIFICITY</scope>
</reference>
<gene>
    <name type="primary">Cend1</name>
    <name type="synonym">Bm88</name>
</gene>
<keyword id="KW-0221">Differentiation</keyword>
<keyword id="KW-0903">Direct protein sequencing</keyword>
<keyword id="KW-0472">Membrane</keyword>
<keyword id="KW-0597">Phosphoprotein</keyword>
<keyword id="KW-1185">Reference proteome</keyword>
<keyword id="KW-0812">Transmembrane</keyword>
<keyword id="KW-1133">Transmembrane helix</keyword>
<protein>
    <recommendedName>
        <fullName>Cell cycle exit and neuronal differentiation protein 1</fullName>
    </recommendedName>
    <alternativeName>
        <fullName>BM88 antigen</fullName>
    </alternativeName>
</protein>
<comment type="function">
    <text evidence="5">Involved in neuronal differentiation.</text>
</comment>
<comment type="subunit">
    <text evidence="2 5">Homodimer (By similarity). Interacts with AHI1 (PubMed:23658157).</text>
</comment>
<comment type="subcellular location">
    <subcellularLocation>
        <location evidence="6">Membrane</location>
        <topology evidence="6">Single-pass type IV membrane protein</topology>
    </subcellularLocation>
</comment>
<comment type="tissue specificity">
    <text evidence="5">Expressed in the brain, including hypothalamus, brainstem, and hippocampus. Expression is high in 1-month-old mouse brain and then declines in mature mouse brains at the age of 3 and 7 months.</text>
</comment>
<comment type="similarity">
    <text evidence="6">Belongs to the CEND1 family.</text>
</comment>
<evidence type="ECO:0000250" key="1">
    <source>
        <dbReference type="UniProtKB" id="Q5FVI4"/>
    </source>
</evidence>
<evidence type="ECO:0000250" key="2">
    <source>
        <dbReference type="UniProtKB" id="Q8N111"/>
    </source>
</evidence>
<evidence type="ECO:0000255" key="3"/>
<evidence type="ECO:0000256" key="4">
    <source>
        <dbReference type="SAM" id="MobiDB-lite"/>
    </source>
</evidence>
<evidence type="ECO:0000269" key="5">
    <source>
    </source>
</evidence>
<evidence type="ECO:0000305" key="6"/>
<evidence type="ECO:0007744" key="7">
    <source>
    </source>
</evidence>
<dbReference type="EMBL" id="AF243130">
    <property type="protein sequence ID" value="AAF62099.1"/>
    <property type="molecule type" value="mRNA"/>
</dbReference>
<dbReference type="EMBL" id="AK005092">
    <property type="protein sequence ID" value="BAB23812.1"/>
    <property type="molecule type" value="mRNA"/>
</dbReference>
<dbReference type="EMBL" id="AK079045">
    <property type="protein sequence ID" value="BAC37512.1"/>
    <property type="molecule type" value="mRNA"/>
</dbReference>
<dbReference type="EMBL" id="BC023032">
    <property type="protein sequence ID" value="AAH23032.1"/>
    <property type="molecule type" value="mRNA"/>
</dbReference>
<dbReference type="CCDS" id="CCDS22012.1"/>
<dbReference type="RefSeq" id="NP_001347414.1">
    <property type="nucleotide sequence ID" value="NM_001360485.1"/>
</dbReference>
<dbReference type="RefSeq" id="NP_067291.1">
    <property type="nucleotide sequence ID" value="NM_021316.5"/>
</dbReference>
<dbReference type="RefSeq" id="XP_006536280.1">
    <property type="nucleotide sequence ID" value="XM_006536217.3"/>
</dbReference>
<dbReference type="SMR" id="Q9JKC6"/>
<dbReference type="BioGRID" id="208316">
    <property type="interactions" value="6"/>
</dbReference>
<dbReference type="FunCoup" id="Q9JKC6">
    <property type="interactions" value="285"/>
</dbReference>
<dbReference type="STRING" id="10090.ENSMUSP00000118591"/>
<dbReference type="GlyGen" id="Q9JKC6">
    <property type="glycosylation" value="1 site"/>
</dbReference>
<dbReference type="iPTMnet" id="Q9JKC6"/>
<dbReference type="PhosphoSitePlus" id="Q9JKC6"/>
<dbReference type="SwissPalm" id="Q9JKC6"/>
<dbReference type="PaxDb" id="10090-ENSMUSP00000118591"/>
<dbReference type="PeptideAtlas" id="Q9JKC6"/>
<dbReference type="ProteomicsDB" id="281460"/>
<dbReference type="Antibodypedia" id="22655">
    <property type="antibodies" value="125 antibodies from 30 providers"/>
</dbReference>
<dbReference type="Ensembl" id="ENSMUST00000084436.10">
    <property type="protein sequence ID" value="ENSMUSP00000081476.4"/>
    <property type="gene ID" value="ENSMUSG00000060240.14"/>
</dbReference>
<dbReference type="Ensembl" id="ENSMUST00000124444.2">
    <property type="protein sequence ID" value="ENSMUSP00000118591.2"/>
    <property type="gene ID" value="ENSMUSG00000060240.14"/>
</dbReference>
<dbReference type="Ensembl" id="ENSMUST00000137488.2">
    <property type="protein sequence ID" value="ENSMUSP00000123334.2"/>
    <property type="gene ID" value="ENSMUSG00000060240.14"/>
</dbReference>
<dbReference type="GeneID" id="57754"/>
<dbReference type="KEGG" id="mmu:57754"/>
<dbReference type="UCSC" id="uc009kkx.1">
    <property type="organism name" value="mouse"/>
</dbReference>
<dbReference type="AGR" id="MGI:1929898"/>
<dbReference type="CTD" id="51286"/>
<dbReference type="MGI" id="MGI:1929898">
    <property type="gene designation" value="Cend1"/>
</dbReference>
<dbReference type="VEuPathDB" id="HostDB:ENSMUSG00000060240"/>
<dbReference type="eggNOG" id="ENOG502SGTV">
    <property type="taxonomic scope" value="Eukaryota"/>
</dbReference>
<dbReference type="GeneTree" id="ENSGT00390000012831"/>
<dbReference type="HOGENOM" id="CLU_1748972_0_0_1"/>
<dbReference type="InParanoid" id="Q9JKC6"/>
<dbReference type="OMA" id="WSCENLN"/>
<dbReference type="OrthoDB" id="9751599at2759"/>
<dbReference type="PhylomeDB" id="Q9JKC6"/>
<dbReference type="TreeFam" id="TF336209"/>
<dbReference type="BioGRID-ORCS" id="57754">
    <property type="hits" value="2 hits in 81 CRISPR screens"/>
</dbReference>
<dbReference type="CD-CODE" id="CE726F99">
    <property type="entry name" value="Postsynaptic density"/>
</dbReference>
<dbReference type="ChiTaRS" id="Cend1">
    <property type="organism name" value="mouse"/>
</dbReference>
<dbReference type="PRO" id="PR:Q9JKC6"/>
<dbReference type="Proteomes" id="UP000000589">
    <property type="component" value="Chromosome 7"/>
</dbReference>
<dbReference type="RNAct" id="Q9JKC6">
    <property type="molecule type" value="protein"/>
</dbReference>
<dbReference type="Bgee" id="ENSMUSG00000060240">
    <property type="expression patterns" value="Expressed in pontine nuclear group and 185 other cell types or tissues"/>
</dbReference>
<dbReference type="GO" id="GO:0016020">
    <property type="term" value="C:membrane"/>
    <property type="evidence" value="ECO:0007669"/>
    <property type="project" value="UniProtKB-SubCell"/>
</dbReference>
<dbReference type="GO" id="GO:0005739">
    <property type="term" value="C:mitochondrion"/>
    <property type="evidence" value="ECO:0007669"/>
    <property type="project" value="Ensembl"/>
</dbReference>
<dbReference type="GO" id="GO:0031982">
    <property type="term" value="C:vesicle"/>
    <property type="evidence" value="ECO:0007669"/>
    <property type="project" value="Ensembl"/>
</dbReference>
<dbReference type="GO" id="GO:0007628">
    <property type="term" value="P:adult walking behavior"/>
    <property type="evidence" value="ECO:0000315"/>
    <property type="project" value="MGI"/>
</dbReference>
<dbReference type="GO" id="GO:0021686">
    <property type="term" value="P:cerebellar granular layer maturation"/>
    <property type="evidence" value="ECO:0000315"/>
    <property type="project" value="MGI"/>
</dbReference>
<dbReference type="GO" id="GO:0021702">
    <property type="term" value="P:cerebellar Purkinje cell differentiation"/>
    <property type="evidence" value="ECO:0000315"/>
    <property type="project" value="MGI"/>
</dbReference>
<dbReference type="GO" id="GO:0021941">
    <property type="term" value="P:negative regulation of cerebellar granule cell precursor proliferation"/>
    <property type="evidence" value="ECO:0000315"/>
    <property type="project" value="MGI"/>
</dbReference>
<dbReference type="GO" id="GO:0030182">
    <property type="term" value="P:neuron differentiation"/>
    <property type="evidence" value="ECO:0000315"/>
    <property type="project" value="UniProtKB"/>
</dbReference>
<dbReference type="GO" id="GO:0021933">
    <property type="term" value="P:radial glia guided migration of cerebellar granule cell"/>
    <property type="evidence" value="ECO:0000315"/>
    <property type="project" value="MGI"/>
</dbReference>
<dbReference type="InterPro" id="IPR020162">
    <property type="entry name" value="Cend1"/>
</dbReference>
<dbReference type="PANTHER" id="PTHR36683">
    <property type="entry name" value="CELL CYCLE EXIT AND NEURONAL DIFFERENTIATION PROTEIN 1"/>
    <property type="match status" value="1"/>
</dbReference>
<dbReference type="PANTHER" id="PTHR36683:SF1">
    <property type="entry name" value="CELL CYCLE EXIT AND NEURONAL DIFFERENTIATION PROTEIN 1"/>
    <property type="match status" value="1"/>
</dbReference>
<dbReference type="Pfam" id="PF15677">
    <property type="entry name" value="CEND1"/>
    <property type="match status" value="1"/>
</dbReference>
<proteinExistence type="evidence at protein level"/>